<name>TMEDA_DROVI</name>
<accession>B4MGF8</accession>
<organism>
    <name type="scientific">Drosophila virilis</name>
    <name type="common">Fruit fly</name>
    <dbReference type="NCBI Taxonomy" id="7244"/>
    <lineage>
        <taxon>Eukaryota</taxon>
        <taxon>Metazoa</taxon>
        <taxon>Ecdysozoa</taxon>
        <taxon>Arthropoda</taxon>
        <taxon>Hexapoda</taxon>
        <taxon>Insecta</taxon>
        <taxon>Pterygota</taxon>
        <taxon>Neoptera</taxon>
        <taxon>Endopterygota</taxon>
        <taxon>Diptera</taxon>
        <taxon>Brachycera</taxon>
        <taxon>Muscomorpha</taxon>
        <taxon>Ephydroidea</taxon>
        <taxon>Drosophilidae</taxon>
        <taxon>Drosophila</taxon>
    </lineage>
</organism>
<evidence type="ECO:0000250" key="1"/>
<evidence type="ECO:0000250" key="2">
    <source>
        <dbReference type="UniProtKB" id="Q8SXY6"/>
    </source>
</evidence>
<evidence type="ECO:0000255" key="3"/>
<evidence type="ECO:0000255" key="4">
    <source>
        <dbReference type="PROSITE-ProRule" id="PRU00096"/>
    </source>
</evidence>
<evidence type="ECO:0000312" key="5">
    <source>
        <dbReference type="EMBL" id="EDW63102.1"/>
    </source>
</evidence>
<sequence length="206" mass="23987">MLKVLYVIFTIFGYIWPIYSVMFHLTPNTQKCLKEDIQANQLVMGEYEVSDVPGQIIDYIARDTKGHILSQKEHITKGKFSFMSEVYDAYEICFISKVPPHQRGISQEVSLVTKKGVETKSYEGIGEASKLKPLEVDLKRLEDLSDSIVRDFALMRKREEEMRDTNEKTNSRVLFFSIFSMCCLLGLATWQVLYLRRYFKAKKLIE</sequence>
<proteinExistence type="inferred from homology"/>
<gene>
    <name evidence="2" type="primary">bai</name>
    <name type="ORF">GJ14134</name>
</gene>
<protein>
    <recommendedName>
        <fullName evidence="2">Transmembrane emp24 domain-containing protein bai</fullName>
    </recommendedName>
</protein>
<reference evidence="5" key="1">
    <citation type="journal article" date="2007" name="Nature">
        <title>Evolution of genes and genomes on the Drosophila phylogeny.</title>
        <authorList>
            <consortium name="Drosophila 12 genomes consortium"/>
        </authorList>
    </citation>
    <scope>NUCLEOTIDE SEQUENCE [LARGE SCALE GENOMIC DNA]</scope>
    <source>
        <strain evidence="5">Tucson 15010-1051.87</strain>
    </source>
</reference>
<dbReference type="EMBL" id="CH940674">
    <property type="protein sequence ID" value="EDW63102.1"/>
    <property type="molecule type" value="Genomic_DNA"/>
</dbReference>
<dbReference type="RefSeq" id="XP_002060211.1">
    <property type="nucleotide sequence ID" value="XM_002060175.4"/>
</dbReference>
<dbReference type="SMR" id="B4MGF8"/>
<dbReference type="FunCoup" id="B4MGF8">
    <property type="interactions" value="2401"/>
</dbReference>
<dbReference type="STRING" id="7244.B4MGF8"/>
<dbReference type="EnsemblMetazoa" id="FBtr0230059">
    <property type="protein sequence ID" value="FBpp0228551"/>
    <property type="gene ID" value="FBgn0201352"/>
</dbReference>
<dbReference type="EnsemblMetazoa" id="XM_002060175.3">
    <property type="protein sequence ID" value="XP_002060211.1"/>
    <property type="gene ID" value="LOC6636736"/>
</dbReference>
<dbReference type="GeneID" id="6636736"/>
<dbReference type="KEGG" id="dvi:6636736"/>
<dbReference type="CTD" id="42996"/>
<dbReference type="eggNOG" id="KOG1691">
    <property type="taxonomic scope" value="Eukaryota"/>
</dbReference>
<dbReference type="HOGENOM" id="CLU_066963_3_1_1"/>
<dbReference type="InParanoid" id="B4MGF8"/>
<dbReference type="OMA" id="DVFEACF"/>
<dbReference type="OrthoDB" id="759142at2759"/>
<dbReference type="PhylomeDB" id="B4MGF8"/>
<dbReference type="ChiTaRS" id="bai">
    <property type="organism name" value="fly"/>
</dbReference>
<dbReference type="Proteomes" id="UP000008792">
    <property type="component" value="Unassembled WGS sequence"/>
</dbReference>
<dbReference type="GO" id="GO:0005737">
    <property type="term" value="C:cytoplasm"/>
    <property type="evidence" value="ECO:0007669"/>
    <property type="project" value="GOC"/>
</dbReference>
<dbReference type="GO" id="GO:0016020">
    <property type="term" value="C:membrane"/>
    <property type="evidence" value="ECO:0007669"/>
    <property type="project" value="UniProtKB-SubCell"/>
</dbReference>
<dbReference type="GO" id="GO:0038024">
    <property type="term" value="F:cargo receptor activity"/>
    <property type="evidence" value="ECO:0007669"/>
    <property type="project" value="EnsemblMetazoa"/>
</dbReference>
<dbReference type="GO" id="GO:0009953">
    <property type="term" value="P:dorsal/ventral pattern formation"/>
    <property type="evidence" value="ECO:0000250"/>
    <property type="project" value="UniProtKB"/>
</dbReference>
<dbReference type="GO" id="GO:0006888">
    <property type="term" value="P:endoplasmic reticulum to Golgi vesicle-mediated transport"/>
    <property type="evidence" value="ECO:0007669"/>
    <property type="project" value="EnsemblMetazoa"/>
</dbReference>
<dbReference type="InterPro" id="IPR015720">
    <property type="entry name" value="Emp24-like"/>
</dbReference>
<dbReference type="InterPro" id="IPR009038">
    <property type="entry name" value="GOLD_dom"/>
</dbReference>
<dbReference type="PANTHER" id="PTHR22811">
    <property type="entry name" value="TRANSMEMBRANE EMP24 DOMAIN-CONTAINING PROTEIN"/>
    <property type="match status" value="1"/>
</dbReference>
<dbReference type="Pfam" id="PF01105">
    <property type="entry name" value="EMP24_GP25L"/>
    <property type="match status" value="1"/>
</dbReference>
<dbReference type="SMART" id="SM01190">
    <property type="entry name" value="EMP24_GP25L"/>
    <property type="match status" value="1"/>
</dbReference>
<dbReference type="PROSITE" id="PS50866">
    <property type="entry name" value="GOLD"/>
    <property type="match status" value="1"/>
</dbReference>
<comment type="function">
    <text evidence="2">Eca and bai are essential, though not redundant, for dorsoventral patterning of the embryo. Specifically required during early embryogenesis for the activity of maternal tkv, while the zygotic tkv is not affected (By similarity).</text>
</comment>
<comment type="subcellular location">
    <subcellularLocation>
        <location evidence="1">Membrane</location>
        <topology evidence="3">Single-pass type I membrane protein</topology>
    </subcellularLocation>
</comment>
<comment type="similarity">
    <text evidence="3">Belongs to the EMP24/GP25L family.</text>
</comment>
<feature type="signal peptide" evidence="3">
    <location>
        <begin position="1"/>
        <end position="20"/>
    </location>
</feature>
<feature type="chain" id="PRO_0000393921" description="Transmembrane emp24 domain-containing protein bai" evidence="3">
    <location>
        <begin position="21"/>
        <end position="206"/>
    </location>
</feature>
<feature type="topological domain" description="Lumenal" evidence="3">
    <location>
        <begin position="21"/>
        <end position="172"/>
    </location>
</feature>
<feature type="transmembrane region" description="Helical" evidence="3">
    <location>
        <begin position="173"/>
        <end position="193"/>
    </location>
</feature>
<feature type="topological domain" description="Cytoplasmic" evidence="3">
    <location>
        <begin position="194"/>
        <end position="206"/>
    </location>
</feature>
<feature type="domain" description="GOLD" evidence="4">
    <location>
        <begin position="30"/>
        <end position="140"/>
    </location>
</feature>
<keyword id="KW-0217">Developmental protein</keyword>
<keyword id="KW-0472">Membrane</keyword>
<keyword id="KW-1185">Reference proteome</keyword>
<keyword id="KW-0732">Signal</keyword>
<keyword id="KW-0812">Transmembrane</keyword>
<keyword id="KW-1133">Transmembrane helix</keyword>